<evidence type="ECO:0000255" key="1">
    <source>
        <dbReference type="HAMAP-Rule" id="MF_00379"/>
    </source>
</evidence>
<proteinExistence type="inferred from homology"/>
<gene>
    <name evidence="1" type="primary">mnmE</name>
    <name evidence="1" type="synonym">trmE</name>
    <name type="ordered locus">AZOSEA15920</name>
    <name type="ORF">ebA2841</name>
</gene>
<organism>
    <name type="scientific">Aromatoleum aromaticum (strain DSM 19018 / LMG 30748 / EbN1)</name>
    <name type="common">Azoarcus sp. (strain EbN1)</name>
    <dbReference type="NCBI Taxonomy" id="76114"/>
    <lineage>
        <taxon>Bacteria</taxon>
        <taxon>Pseudomonadati</taxon>
        <taxon>Pseudomonadota</taxon>
        <taxon>Betaproteobacteria</taxon>
        <taxon>Rhodocyclales</taxon>
        <taxon>Rhodocyclaceae</taxon>
        <taxon>Aromatoleum</taxon>
    </lineage>
</organism>
<sequence>MRSPAPSLPDIIAALATAPGRGGIGVVRVSGAALAPFARALTGREPKPRHAAFTHFVDAVGKPIDEGILLYFPAPHSFTGEDVIELQGHGGPVVLQLVLARCLELGARLAEPGEFSRRAFLNGKMDLAQAEAVADLIEASTVVAARSAVRSLSGVFSDEMHRLTDALIDLRMLVEATLDFPDEDVEFLENARALERLDAIRVKLERVLERARQGALLRSGMNVVLVGQPNVGKSSLLNCLAGDERAIVTDIAGTTRDAVRETIAIEGIPIHVIDTAGLRETADPVERLGVERTWREIARADVILRIVDARVGPQPGDDAIDAALPEGVERITIFNKIDLCGLEPARLQHDDGVVIQLSAQLALGVDLLRSELLRVAGWHAHGDDVVLARERHLVALRDALTHVVAARSQCGALELFAEELRLAQIRIGEITGEFSSDDLLGVIFSRFCIGK</sequence>
<dbReference type="EC" id="3.6.-.-" evidence="1"/>
<dbReference type="EMBL" id="CR555306">
    <property type="protein sequence ID" value="CAI07717.1"/>
    <property type="molecule type" value="Genomic_DNA"/>
</dbReference>
<dbReference type="RefSeq" id="WP_011237432.1">
    <property type="nucleotide sequence ID" value="NC_006513.1"/>
</dbReference>
<dbReference type="SMR" id="Q5P4P5"/>
<dbReference type="STRING" id="76114.ebA2841"/>
<dbReference type="KEGG" id="eba:ebA2841"/>
<dbReference type="eggNOG" id="COG0486">
    <property type="taxonomic scope" value="Bacteria"/>
</dbReference>
<dbReference type="HOGENOM" id="CLU_019624_4_1_4"/>
<dbReference type="OrthoDB" id="9805918at2"/>
<dbReference type="Proteomes" id="UP000006552">
    <property type="component" value="Chromosome"/>
</dbReference>
<dbReference type="GO" id="GO:0005829">
    <property type="term" value="C:cytosol"/>
    <property type="evidence" value="ECO:0007669"/>
    <property type="project" value="TreeGrafter"/>
</dbReference>
<dbReference type="GO" id="GO:0005525">
    <property type="term" value="F:GTP binding"/>
    <property type="evidence" value="ECO:0007669"/>
    <property type="project" value="UniProtKB-UniRule"/>
</dbReference>
<dbReference type="GO" id="GO:0003924">
    <property type="term" value="F:GTPase activity"/>
    <property type="evidence" value="ECO:0007669"/>
    <property type="project" value="UniProtKB-UniRule"/>
</dbReference>
<dbReference type="GO" id="GO:0046872">
    <property type="term" value="F:metal ion binding"/>
    <property type="evidence" value="ECO:0007669"/>
    <property type="project" value="UniProtKB-KW"/>
</dbReference>
<dbReference type="GO" id="GO:0030488">
    <property type="term" value="P:tRNA methylation"/>
    <property type="evidence" value="ECO:0007669"/>
    <property type="project" value="TreeGrafter"/>
</dbReference>
<dbReference type="GO" id="GO:0002098">
    <property type="term" value="P:tRNA wobble uridine modification"/>
    <property type="evidence" value="ECO:0007669"/>
    <property type="project" value="TreeGrafter"/>
</dbReference>
<dbReference type="CDD" id="cd04164">
    <property type="entry name" value="trmE"/>
    <property type="match status" value="1"/>
</dbReference>
<dbReference type="CDD" id="cd14858">
    <property type="entry name" value="TrmE_N"/>
    <property type="match status" value="1"/>
</dbReference>
<dbReference type="Gene3D" id="3.40.50.300">
    <property type="entry name" value="P-loop containing nucleotide triphosphate hydrolases"/>
    <property type="match status" value="1"/>
</dbReference>
<dbReference type="Gene3D" id="3.30.1360.120">
    <property type="entry name" value="Probable tRNA modification gtpase trme, domain 1"/>
    <property type="match status" value="1"/>
</dbReference>
<dbReference type="Gene3D" id="1.20.120.430">
    <property type="entry name" value="tRNA modification GTPase MnmE domain 2"/>
    <property type="match status" value="1"/>
</dbReference>
<dbReference type="HAMAP" id="MF_00379">
    <property type="entry name" value="GTPase_MnmE"/>
    <property type="match status" value="1"/>
</dbReference>
<dbReference type="InterPro" id="IPR031168">
    <property type="entry name" value="G_TrmE"/>
</dbReference>
<dbReference type="InterPro" id="IPR006073">
    <property type="entry name" value="GTP-bd"/>
</dbReference>
<dbReference type="InterPro" id="IPR018948">
    <property type="entry name" value="GTP-bd_TrmE_N"/>
</dbReference>
<dbReference type="InterPro" id="IPR004520">
    <property type="entry name" value="GTPase_MnmE"/>
</dbReference>
<dbReference type="InterPro" id="IPR027368">
    <property type="entry name" value="MnmE_dom2"/>
</dbReference>
<dbReference type="InterPro" id="IPR025867">
    <property type="entry name" value="MnmE_helical"/>
</dbReference>
<dbReference type="InterPro" id="IPR027417">
    <property type="entry name" value="P-loop_NTPase"/>
</dbReference>
<dbReference type="InterPro" id="IPR005225">
    <property type="entry name" value="Small_GTP-bd"/>
</dbReference>
<dbReference type="InterPro" id="IPR027266">
    <property type="entry name" value="TrmE/GcvT_dom1"/>
</dbReference>
<dbReference type="NCBIfam" id="TIGR00450">
    <property type="entry name" value="mnmE_trmE_thdF"/>
    <property type="match status" value="1"/>
</dbReference>
<dbReference type="NCBIfam" id="NF003661">
    <property type="entry name" value="PRK05291.1-3"/>
    <property type="match status" value="1"/>
</dbReference>
<dbReference type="NCBIfam" id="TIGR00231">
    <property type="entry name" value="small_GTP"/>
    <property type="match status" value="1"/>
</dbReference>
<dbReference type="PANTHER" id="PTHR42714">
    <property type="entry name" value="TRNA MODIFICATION GTPASE GTPBP3"/>
    <property type="match status" value="1"/>
</dbReference>
<dbReference type="PANTHER" id="PTHR42714:SF2">
    <property type="entry name" value="TRNA MODIFICATION GTPASE GTPBP3, MITOCHONDRIAL"/>
    <property type="match status" value="1"/>
</dbReference>
<dbReference type="Pfam" id="PF01926">
    <property type="entry name" value="MMR_HSR1"/>
    <property type="match status" value="1"/>
</dbReference>
<dbReference type="Pfam" id="PF12631">
    <property type="entry name" value="MnmE_helical"/>
    <property type="match status" value="1"/>
</dbReference>
<dbReference type="Pfam" id="PF10396">
    <property type="entry name" value="TrmE_N"/>
    <property type="match status" value="1"/>
</dbReference>
<dbReference type="SUPFAM" id="SSF52540">
    <property type="entry name" value="P-loop containing nucleoside triphosphate hydrolases"/>
    <property type="match status" value="1"/>
</dbReference>
<dbReference type="SUPFAM" id="SSF116878">
    <property type="entry name" value="TrmE connector domain"/>
    <property type="match status" value="1"/>
</dbReference>
<dbReference type="PROSITE" id="PS51709">
    <property type="entry name" value="G_TRME"/>
    <property type="match status" value="1"/>
</dbReference>
<comment type="function">
    <text evidence="1">Exhibits a very high intrinsic GTPase hydrolysis rate. Involved in the addition of a carboxymethylaminomethyl (cmnm) group at the wobble position (U34) of certain tRNAs, forming tRNA-cmnm(5)s(2)U34.</text>
</comment>
<comment type="cofactor">
    <cofactor evidence="1">
        <name>K(+)</name>
        <dbReference type="ChEBI" id="CHEBI:29103"/>
    </cofactor>
    <text evidence="1">Binds 1 potassium ion per subunit.</text>
</comment>
<comment type="subunit">
    <text evidence="1">Homodimer. Heterotetramer of two MnmE and two MnmG subunits.</text>
</comment>
<comment type="subcellular location">
    <subcellularLocation>
        <location evidence="1">Cytoplasm</location>
    </subcellularLocation>
</comment>
<comment type="similarity">
    <text evidence="1">Belongs to the TRAFAC class TrmE-Era-EngA-EngB-Septin-like GTPase superfamily. TrmE GTPase family.</text>
</comment>
<name>MNME_AROAE</name>
<protein>
    <recommendedName>
        <fullName evidence="1">tRNA modification GTPase MnmE</fullName>
        <ecNumber evidence="1">3.6.-.-</ecNumber>
    </recommendedName>
</protein>
<keyword id="KW-0963">Cytoplasm</keyword>
<keyword id="KW-0342">GTP-binding</keyword>
<keyword id="KW-0378">Hydrolase</keyword>
<keyword id="KW-0460">Magnesium</keyword>
<keyword id="KW-0479">Metal-binding</keyword>
<keyword id="KW-0547">Nucleotide-binding</keyword>
<keyword id="KW-0630">Potassium</keyword>
<keyword id="KW-1185">Reference proteome</keyword>
<keyword id="KW-0819">tRNA processing</keyword>
<reference key="1">
    <citation type="journal article" date="2005" name="Arch. Microbiol.">
        <title>The genome sequence of an anaerobic aromatic-degrading denitrifying bacterium, strain EbN1.</title>
        <authorList>
            <person name="Rabus R."/>
            <person name="Kube M."/>
            <person name="Heider J."/>
            <person name="Beck A."/>
            <person name="Heitmann K."/>
            <person name="Widdel F."/>
            <person name="Reinhardt R."/>
        </authorList>
    </citation>
    <scope>NUCLEOTIDE SEQUENCE [LARGE SCALE GENOMIC DNA]</scope>
    <source>
        <strain>DSM 19018 / LMG 30748 / EbN1</strain>
    </source>
</reference>
<accession>Q5P4P5</accession>
<feature type="chain" id="PRO_0000345709" description="tRNA modification GTPase MnmE">
    <location>
        <begin position="1"/>
        <end position="451"/>
    </location>
</feature>
<feature type="domain" description="TrmE-type G">
    <location>
        <begin position="220"/>
        <end position="377"/>
    </location>
</feature>
<feature type="binding site" evidence="1">
    <location>
        <position position="28"/>
    </location>
    <ligand>
        <name>(6S)-5-formyl-5,6,7,8-tetrahydrofolate</name>
        <dbReference type="ChEBI" id="CHEBI:57457"/>
    </ligand>
</feature>
<feature type="binding site" evidence="1">
    <location>
        <position position="85"/>
    </location>
    <ligand>
        <name>(6S)-5-formyl-5,6,7,8-tetrahydrofolate</name>
        <dbReference type="ChEBI" id="CHEBI:57457"/>
    </ligand>
</feature>
<feature type="binding site" evidence="1">
    <location>
        <position position="124"/>
    </location>
    <ligand>
        <name>(6S)-5-formyl-5,6,7,8-tetrahydrofolate</name>
        <dbReference type="ChEBI" id="CHEBI:57457"/>
    </ligand>
</feature>
<feature type="binding site" evidence="1">
    <location>
        <begin position="230"/>
        <end position="235"/>
    </location>
    <ligand>
        <name>GTP</name>
        <dbReference type="ChEBI" id="CHEBI:37565"/>
    </ligand>
</feature>
<feature type="binding site" evidence="1">
    <location>
        <position position="230"/>
    </location>
    <ligand>
        <name>K(+)</name>
        <dbReference type="ChEBI" id="CHEBI:29103"/>
    </ligand>
</feature>
<feature type="binding site" evidence="1">
    <location>
        <position position="234"/>
    </location>
    <ligand>
        <name>Mg(2+)</name>
        <dbReference type="ChEBI" id="CHEBI:18420"/>
    </ligand>
</feature>
<feature type="binding site" evidence="1">
    <location>
        <begin position="249"/>
        <end position="255"/>
    </location>
    <ligand>
        <name>GTP</name>
        <dbReference type="ChEBI" id="CHEBI:37565"/>
    </ligand>
</feature>
<feature type="binding site" evidence="1">
    <location>
        <position position="249"/>
    </location>
    <ligand>
        <name>K(+)</name>
        <dbReference type="ChEBI" id="CHEBI:29103"/>
    </ligand>
</feature>
<feature type="binding site" evidence="1">
    <location>
        <position position="251"/>
    </location>
    <ligand>
        <name>K(+)</name>
        <dbReference type="ChEBI" id="CHEBI:29103"/>
    </ligand>
</feature>
<feature type="binding site" evidence="1">
    <location>
        <position position="254"/>
    </location>
    <ligand>
        <name>K(+)</name>
        <dbReference type="ChEBI" id="CHEBI:29103"/>
    </ligand>
</feature>
<feature type="binding site" evidence="1">
    <location>
        <position position="255"/>
    </location>
    <ligand>
        <name>Mg(2+)</name>
        <dbReference type="ChEBI" id="CHEBI:18420"/>
    </ligand>
</feature>
<feature type="binding site" evidence="1">
    <location>
        <begin position="274"/>
        <end position="277"/>
    </location>
    <ligand>
        <name>GTP</name>
        <dbReference type="ChEBI" id="CHEBI:37565"/>
    </ligand>
</feature>
<feature type="binding site" evidence="1">
    <location>
        <position position="451"/>
    </location>
    <ligand>
        <name>(6S)-5-formyl-5,6,7,8-tetrahydrofolate</name>
        <dbReference type="ChEBI" id="CHEBI:57457"/>
    </ligand>
</feature>